<evidence type="ECO:0000255" key="1">
    <source>
        <dbReference type="HAMAP-Rule" id="MF_00736"/>
    </source>
</evidence>
<evidence type="ECO:0000305" key="2"/>
<comment type="function">
    <text evidence="1">Forms part of the ribosomal stalk which helps the ribosome interact with GTP-bound translation factors.</text>
</comment>
<comment type="subunit">
    <text evidence="1">Part of the ribosomal stalk of the 50S ribosomal subunit. Interacts with L10 and the large rRNA to form the base of the stalk. L10 forms an elongated spine to which L12 dimers bind in a sequential fashion forming a multimeric L10(L12)X complex.</text>
</comment>
<comment type="PTM">
    <text evidence="1">One or more lysine residues are methylated.</text>
</comment>
<comment type="similarity">
    <text evidence="1">Belongs to the universal ribosomal protein uL11 family.</text>
</comment>
<name>RL11_CERS5</name>
<organism>
    <name type="scientific">Cereibacter sphaeroides (strain ATCC 17025 / ATH 2.4.3)</name>
    <name type="common">Rhodobacter sphaeroides</name>
    <dbReference type="NCBI Taxonomy" id="349102"/>
    <lineage>
        <taxon>Bacteria</taxon>
        <taxon>Pseudomonadati</taxon>
        <taxon>Pseudomonadota</taxon>
        <taxon>Alphaproteobacteria</taxon>
        <taxon>Rhodobacterales</taxon>
        <taxon>Paracoccaceae</taxon>
        <taxon>Cereibacter</taxon>
    </lineage>
</organism>
<dbReference type="EMBL" id="CP000661">
    <property type="protein sequence ID" value="ABP71434.1"/>
    <property type="molecule type" value="Genomic_DNA"/>
</dbReference>
<dbReference type="SMR" id="A4WVM0"/>
<dbReference type="STRING" id="349102.Rsph17025_2546"/>
<dbReference type="KEGG" id="rsq:Rsph17025_2546"/>
<dbReference type="eggNOG" id="COG0080">
    <property type="taxonomic scope" value="Bacteria"/>
</dbReference>
<dbReference type="HOGENOM" id="CLU_074237_2_0_5"/>
<dbReference type="BioCyc" id="RSPH349102:G1G8M-2624-MONOMER"/>
<dbReference type="GO" id="GO:0022625">
    <property type="term" value="C:cytosolic large ribosomal subunit"/>
    <property type="evidence" value="ECO:0007669"/>
    <property type="project" value="TreeGrafter"/>
</dbReference>
<dbReference type="GO" id="GO:0070180">
    <property type="term" value="F:large ribosomal subunit rRNA binding"/>
    <property type="evidence" value="ECO:0007669"/>
    <property type="project" value="UniProtKB-UniRule"/>
</dbReference>
<dbReference type="GO" id="GO:0003735">
    <property type="term" value="F:structural constituent of ribosome"/>
    <property type="evidence" value="ECO:0007669"/>
    <property type="project" value="InterPro"/>
</dbReference>
<dbReference type="GO" id="GO:0006412">
    <property type="term" value="P:translation"/>
    <property type="evidence" value="ECO:0007669"/>
    <property type="project" value="UniProtKB-UniRule"/>
</dbReference>
<dbReference type="CDD" id="cd00349">
    <property type="entry name" value="Ribosomal_L11"/>
    <property type="match status" value="1"/>
</dbReference>
<dbReference type="FunFam" id="3.30.1550.10:FF:000005">
    <property type="entry name" value="50S ribosomal protein L11"/>
    <property type="match status" value="1"/>
</dbReference>
<dbReference type="Gene3D" id="1.10.10.250">
    <property type="entry name" value="Ribosomal protein L11, C-terminal domain"/>
    <property type="match status" value="1"/>
</dbReference>
<dbReference type="Gene3D" id="3.30.1550.10">
    <property type="entry name" value="Ribosomal protein L11/L12, N-terminal domain"/>
    <property type="match status" value="1"/>
</dbReference>
<dbReference type="HAMAP" id="MF_00736">
    <property type="entry name" value="Ribosomal_uL11"/>
    <property type="match status" value="1"/>
</dbReference>
<dbReference type="InterPro" id="IPR000911">
    <property type="entry name" value="Ribosomal_uL11"/>
</dbReference>
<dbReference type="InterPro" id="IPR006519">
    <property type="entry name" value="Ribosomal_uL11_bac-typ"/>
</dbReference>
<dbReference type="InterPro" id="IPR020783">
    <property type="entry name" value="Ribosomal_uL11_C"/>
</dbReference>
<dbReference type="InterPro" id="IPR036769">
    <property type="entry name" value="Ribosomal_uL11_C_sf"/>
</dbReference>
<dbReference type="InterPro" id="IPR020784">
    <property type="entry name" value="Ribosomal_uL11_N"/>
</dbReference>
<dbReference type="InterPro" id="IPR036796">
    <property type="entry name" value="Ribosomal_uL11_N_sf"/>
</dbReference>
<dbReference type="NCBIfam" id="TIGR01632">
    <property type="entry name" value="L11_bact"/>
    <property type="match status" value="1"/>
</dbReference>
<dbReference type="PANTHER" id="PTHR11661">
    <property type="entry name" value="60S RIBOSOMAL PROTEIN L12"/>
    <property type="match status" value="1"/>
</dbReference>
<dbReference type="PANTHER" id="PTHR11661:SF1">
    <property type="entry name" value="LARGE RIBOSOMAL SUBUNIT PROTEIN UL11M"/>
    <property type="match status" value="1"/>
</dbReference>
<dbReference type="Pfam" id="PF00298">
    <property type="entry name" value="Ribosomal_L11"/>
    <property type="match status" value="1"/>
</dbReference>
<dbReference type="Pfam" id="PF03946">
    <property type="entry name" value="Ribosomal_L11_N"/>
    <property type="match status" value="1"/>
</dbReference>
<dbReference type="SMART" id="SM00649">
    <property type="entry name" value="RL11"/>
    <property type="match status" value="1"/>
</dbReference>
<dbReference type="SUPFAM" id="SSF54747">
    <property type="entry name" value="Ribosomal L11/L12e N-terminal domain"/>
    <property type="match status" value="1"/>
</dbReference>
<dbReference type="SUPFAM" id="SSF46906">
    <property type="entry name" value="Ribosomal protein L11, C-terminal domain"/>
    <property type="match status" value="1"/>
</dbReference>
<protein>
    <recommendedName>
        <fullName evidence="1">Large ribosomal subunit protein uL11</fullName>
    </recommendedName>
    <alternativeName>
        <fullName evidence="2">50S ribosomal protein L11</fullName>
    </alternativeName>
</protein>
<proteinExistence type="inferred from homology"/>
<reference key="1">
    <citation type="submission" date="2007-04" db="EMBL/GenBank/DDBJ databases">
        <title>Complete sequence of chromosome of Rhodobacter sphaeroides ATCC 17025.</title>
        <authorList>
            <consortium name="US DOE Joint Genome Institute"/>
            <person name="Copeland A."/>
            <person name="Lucas S."/>
            <person name="Lapidus A."/>
            <person name="Barry K."/>
            <person name="Detter J.C."/>
            <person name="Glavina del Rio T."/>
            <person name="Hammon N."/>
            <person name="Israni S."/>
            <person name="Dalin E."/>
            <person name="Tice H."/>
            <person name="Pitluck S."/>
            <person name="Chertkov O."/>
            <person name="Brettin T."/>
            <person name="Bruce D."/>
            <person name="Han C."/>
            <person name="Schmutz J."/>
            <person name="Larimer F."/>
            <person name="Land M."/>
            <person name="Hauser L."/>
            <person name="Kyrpides N."/>
            <person name="Kim E."/>
            <person name="Richardson P."/>
            <person name="Mackenzie C."/>
            <person name="Choudhary M."/>
            <person name="Donohue T.J."/>
            <person name="Kaplan S."/>
        </authorList>
    </citation>
    <scope>NUCLEOTIDE SEQUENCE [LARGE SCALE GENOMIC DNA]</scope>
    <source>
        <strain>ATCC 17025 / ATH 2.4.3</strain>
    </source>
</reference>
<gene>
    <name evidence="1" type="primary">rplK</name>
    <name type="ordered locus">Rsph17025_2546</name>
</gene>
<feature type="chain" id="PRO_1000046251" description="Large ribosomal subunit protein uL11">
    <location>
        <begin position="1"/>
        <end position="150"/>
    </location>
</feature>
<keyword id="KW-0488">Methylation</keyword>
<keyword id="KW-0687">Ribonucleoprotein</keyword>
<keyword id="KW-0689">Ribosomal protein</keyword>
<keyword id="KW-0694">RNA-binding</keyword>
<keyword id="KW-0699">rRNA-binding</keyword>
<accession>A4WVM0</accession>
<sequence length="150" mass="15707">MAKKIIGSLKLQVKAGQANPSPPVGPALGQRGLNIMAFVKEFNAKTADLEPGTPTPVIITYYQDKSFSLELKTPPASFLLKKAAGLAPVGKRNRPKGSAKPGREVAGTVAVAQIRKIAEAKMKDLNANDVEAAMQIILGSAKSCGIEVKG</sequence>